<gene>
    <name evidence="1" type="primary">glgA</name>
    <name type="ordered locus">CPE0064</name>
</gene>
<accession>Q8XPA1</accession>
<proteinExistence type="inferred from homology"/>
<evidence type="ECO:0000255" key="1">
    <source>
        <dbReference type="HAMAP-Rule" id="MF_00484"/>
    </source>
</evidence>
<organism>
    <name type="scientific">Clostridium perfringens (strain 13 / Type A)</name>
    <dbReference type="NCBI Taxonomy" id="195102"/>
    <lineage>
        <taxon>Bacteria</taxon>
        <taxon>Bacillati</taxon>
        <taxon>Bacillota</taxon>
        <taxon>Clostridia</taxon>
        <taxon>Eubacteriales</taxon>
        <taxon>Clostridiaceae</taxon>
        <taxon>Clostridium</taxon>
    </lineage>
</organism>
<feature type="chain" id="PRO_0000188608" description="Glycogen synthase">
    <location>
        <begin position="1"/>
        <end position="482"/>
    </location>
</feature>
<feature type="binding site" evidence="1">
    <location>
        <position position="21"/>
    </location>
    <ligand>
        <name>ADP-alpha-D-glucose</name>
        <dbReference type="ChEBI" id="CHEBI:57498"/>
    </ligand>
</feature>
<comment type="function">
    <text evidence="1">Synthesizes alpha-1,4-glucan chains using ADP-glucose.</text>
</comment>
<comment type="catalytic activity">
    <reaction evidence="1">
        <text>[(1-&gt;4)-alpha-D-glucosyl](n) + ADP-alpha-D-glucose = [(1-&gt;4)-alpha-D-glucosyl](n+1) + ADP + H(+)</text>
        <dbReference type="Rhea" id="RHEA:18189"/>
        <dbReference type="Rhea" id="RHEA-COMP:9584"/>
        <dbReference type="Rhea" id="RHEA-COMP:9587"/>
        <dbReference type="ChEBI" id="CHEBI:15378"/>
        <dbReference type="ChEBI" id="CHEBI:15444"/>
        <dbReference type="ChEBI" id="CHEBI:57498"/>
        <dbReference type="ChEBI" id="CHEBI:456216"/>
        <dbReference type="EC" id="2.4.1.21"/>
    </reaction>
</comment>
<comment type="pathway">
    <text evidence="1">Glycan biosynthesis; glycogen biosynthesis.</text>
</comment>
<comment type="similarity">
    <text evidence="1">Belongs to the glycosyltransferase 1 family. Bacterial/plant glycogen synthase subfamily.</text>
</comment>
<protein>
    <recommendedName>
        <fullName evidence="1">Glycogen synthase</fullName>
        <ecNumber evidence="1">2.4.1.21</ecNumber>
    </recommendedName>
    <alternativeName>
        <fullName evidence="1">Starch [bacterial glycogen] synthase</fullName>
    </alternativeName>
</protein>
<sequence>MEGFKLIKVLFATSEANPFIKTGGLGDVMGALPKELKRKGIDARVILPKYSAIKGELLDKLSFKKWFMVPVGWRNQYCGVYQCEYDEVIYYLLDSEFYFHRNGLYGEGDDGERFAFFDRAVLETLKEIDWCPDIIHCNDWQTGMIPVLHKLEYSKDPFYKNIKTVTSIHNLLFQGNFSADVLPELFGYDYEPVRNGSLEFYGGMSFMKGAINYSDRILTVSETYAKEIKTPYFGENLDGLLRERGYALKGIVNGIDYDEFNPSKDSLIAKNFSVKTIEDKVLNKLALQKELGLPINPDIPMISIVSRLTNQKGCDLIVNIANRLLQRNVQLVILGTGDYNYENHFKGLQELYPTKVSANIKFDNGLAHRIYASSDIFLMPSLFEPCGLGQLIALRYGAIPIVRETGGLKDTIHSYNKYTGIGNGFSFTNYNHNDLMHVIELALETYDDKEIWRSLIIQAMDSDNSWNKSAEKYKELYEELIK</sequence>
<name>GLGA_CLOPE</name>
<dbReference type="EC" id="2.4.1.21" evidence="1"/>
<dbReference type="EMBL" id="BA000016">
    <property type="protein sequence ID" value="BAB79770.1"/>
    <property type="molecule type" value="Genomic_DNA"/>
</dbReference>
<dbReference type="SMR" id="Q8XPA1"/>
<dbReference type="STRING" id="195102.gene:10489300"/>
<dbReference type="CAZy" id="GT5">
    <property type="family name" value="Glycosyltransferase Family 5"/>
</dbReference>
<dbReference type="KEGG" id="cpe:CPE0064"/>
<dbReference type="HOGENOM" id="CLU_009583_18_2_9"/>
<dbReference type="UniPathway" id="UPA00164"/>
<dbReference type="Proteomes" id="UP000000818">
    <property type="component" value="Chromosome"/>
</dbReference>
<dbReference type="GO" id="GO:0009011">
    <property type="term" value="F:alpha-1,4-glucan glucosyltransferase (ADP-glucose donor) activity"/>
    <property type="evidence" value="ECO:0007669"/>
    <property type="project" value="UniProtKB-UniRule"/>
</dbReference>
<dbReference type="GO" id="GO:0004373">
    <property type="term" value="F:alpha-1,4-glucan glucosyltransferase (UDP-glucose donor) activity"/>
    <property type="evidence" value="ECO:0007669"/>
    <property type="project" value="InterPro"/>
</dbReference>
<dbReference type="GO" id="GO:0005978">
    <property type="term" value="P:glycogen biosynthetic process"/>
    <property type="evidence" value="ECO:0007669"/>
    <property type="project" value="UniProtKB-UniRule"/>
</dbReference>
<dbReference type="CDD" id="cd03791">
    <property type="entry name" value="GT5_Glycogen_synthase_DULL1-like"/>
    <property type="match status" value="1"/>
</dbReference>
<dbReference type="Gene3D" id="3.40.50.2000">
    <property type="entry name" value="Glycogen Phosphorylase B"/>
    <property type="match status" value="2"/>
</dbReference>
<dbReference type="HAMAP" id="MF_00484">
    <property type="entry name" value="Glycogen_synth"/>
    <property type="match status" value="1"/>
</dbReference>
<dbReference type="InterPro" id="IPR001296">
    <property type="entry name" value="Glyco_trans_1"/>
</dbReference>
<dbReference type="InterPro" id="IPR011835">
    <property type="entry name" value="GS/SS"/>
</dbReference>
<dbReference type="InterPro" id="IPR013534">
    <property type="entry name" value="Starch_synth_cat_dom"/>
</dbReference>
<dbReference type="NCBIfam" id="TIGR02095">
    <property type="entry name" value="glgA"/>
    <property type="match status" value="1"/>
</dbReference>
<dbReference type="NCBIfam" id="NF001898">
    <property type="entry name" value="PRK00654.1-1"/>
    <property type="match status" value="1"/>
</dbReference>
<dbReference type="PANTHER" id="PTHR45825:SF11">
    <property type="entry name" value="ALPHA AMYLASE DOMAIN-CONTAINING PROTEIN"/>
    <property type="match status" value="1"/>
</dbReference>
<dbReference type="PANTHER" id="PTHR45825">
    <property type="entry name" value="GRANULE-BOUND STARCH SYNTHASE 1, CHLOROPLASTIC/AMYLOPLASTIC"/>
    <property type="match status" value="1"/>
</dbReference>
<dbReference type="Pfam" id="PF08323">
    <property type="entry name" value="Glyco_transf_5"/>
    <property type="match status" value="1"/>
</dbReference>
<dbReference type="Pfam" id="PF00534">
    <property type="entry name" value="Glycos_transf_1"/>
    <property type="match status" value="1"/>
</dbReference>
<dbReference type="SUPFAM" id="SSF53756">
    <property type="entry name" value="UDP-Glycosyltransferase/glycogen phosphorylase"/>
    <property type="match status" value="1"/>
</dbReference>
<keyword id="KW-0320">Glycogen biosynthesis</keyword>
<keyword id="KW-0328">Glycosyltransferase</keyword>
<keyword id="KW-1185">Reference proteome</keyword>
<keyword id="KW-0808">Transferase</keyword>
<reference key="1">
    <citation type="journal article" date="2002" name="Proc. Natl. Acad. Sci. U.S.A.">
        <title>Complete genome sequence of Clostridium perfringens, an anaerobic flesh-eater.</title>
        <authorList>
            <person name="Shimizu T."/>
            <person name="Ohtani K."/>
            <person name="Hirakawa H."/>
            <person name="Ohshima K."/>
            <person name="Yamashita A."/>
            <person name="Shiba T."/>
            <person name="Ogasawara N."/>
            <person name="Hattori M."/>
            <person name="Kuhara S."/>
            <person name="Hayashi H."/>
        </authorList>
    </citation>
    <scope>NUCLEOTIDE SEQUENCE [LARGE SCALE GENOMIC DNA]</scope>
    <source>
        <strain>13 / Type A</strain>
    </source>
</reference>